<name>YQGF_KARMG</name>
<protein>
    <recommendedName>
        <fullName evidence="1">Putative pre-16S rRNA nuclease</fullName>
        <ecNumber evidence="1">3.1.-.-</ecNumber>
    </recommendedName>
</protein>
<evidence type="ECO:0000255" key="1">
    <source>
        <dbReference type="HAMAP-Rule" id="MF_00651"/>
    </source>
</evidence>
<sequence length="138" mass="16247">MSKILCIDYGKKRIGLSITNSIRSIAFGLDTVNSNNIICTLYKYLKYEDIDTIVIGLPIRFDNSLFPIEKDIKKFIKIINNKYPKLIIKRIDERFTSKIANYYLINTRLKINQLKKNQNFLDKDKISATILLQEYIKY</sequence>
<gene>
    <name type="ordered locus">SMGWSS_096</name>
</gene>
<feature type="chain" id="PRO_1000082759" description="Putative pre-16S rRNA nuclease">
    <location>
        <begin position="1"/>
        <end position="138"/>
    </location>
</feature>
<keyword id="KW-0963">Cytoplasm</keyword>
<keyword id="KW-0378">Hydrolase</keyword>
<keyword id="KW-0540">Nuclease</keyword>
<keyword id="KW-0690">Ribosome biogenesis</keyword>
<proteinExistence type="inferred from homology"/>
<organism>
    <name type="scientific">Karelsulcia muelleri (strain GWSS)</name>
    <name type="common">Sulcia muelleri</name>
    <dbReference type="NCBI Taxonomy" id="444179"/>
    <lineage>
        <taxon>Bacteria</taxon>
        <taxon>Pseudomonadati</taxon>
        <taxon>Bacteroidota</taxon>
        <taxon>Flavobacteriia</taxon>
        <taxon>Flavobacteriales</taxon>
        <taxon>Candidatus Karelsulcia</taxon>
    </lineage>
</organism>
<comment type="function">
    <text evidence="1">Could be a nuclease involved in processing of the 5'-end of pre-16S rRNA.</text>
</comment>
<comment type="subcellular location">
    <subcellularLocation>
        <location evidence="1">Cytoplasm</location>
    </subcellularLocation>
</comment>
<comment type="similarity">
    <text evidence="1">Belongs to the YqgF nuclease family.</text>
</comment>
<dbReference type="EC" id="3.1.-.-" evidence="1"/>
<dbReference type="EMBL" id="CP000770">
    <property type="protein sequence ID" value="ABS30511.1"/>
    <property type="molecule type" value="Genomic_DNA"/>
</dbReference>
<dbReference type="SMR" id="A8Z5W0"/>
<dbReference type="STRING" id="444179.SMGWSS_096"/>
<dbReference type="KEGG" id="smg:SMGWSS_096"/>
<dbReference type="HOGENOM" id="CLU_098240_2_1_10"/>
<dbReference type="BioCyc" id="CSUL444179:GHLI-94-MONOMER"/>
<dbReference type="Proteomes" id="UP000000781">
    <property type="component" value="Chromosome"/>
</dbReference>
<dbReference type="GO" id="GO:0005829">
    <property type="term" value="C:cytosol"/>
    <property type="evidence" value="ECO:0007669"/>
    <property type="project" value="TreeGrafter"/>
</dbReference>
<dbReference type="GO" id="GO:0004518">
    <property type="term" value="F:nuclease activity"/>
    <property type="evidence" value="ECO:0007669"/>
    <property type="project" value="UniProtKB-KW"/>
</dbReference>
<dbReference type="GO" id="GO:0000967">
    <property type="term" value="P:rRNA 5'-end processing"/>
    <property type="evidence" value="ECO:0007669"/>
    <property type="project" value="UniProtKB-UniRule"/>
</dbReference>
<dbReference type="CDD" id="cd16964">
    <property type="entry name" value="YqgF"/>
    <property type="match status" value="1"/>
</dbReference>
<dbReference type="Gene3D" id="3.30.420.140">
    <property type="entry name" value="YqgF/RNase H-like domain"/>
    <property type="match status" value="1"/>
</dbReference>
<dbReference type="HAMAP" id="MF_00651">
    <property type="entry name" value="Nuclease_YqgF"/>
    <property type="match status" value="1"/>
</dbReference>
<dbReference type="InterPro" id="IPR012337">
    <property type="entry name" value="RNaseH-like_sf"/>
</dbReference>
<dbReference type="InterPro" id="IPR005227">
    <property type="entry name" value="YqgF"/>
</dbReference>
<dbReference type="InterPro" id="IPR006641">
    <property type="entry name" value="YqgF/RNaseH-like_dom"/>
</dbReference>
<dbReference type="InterPro" id="IPR037027">
    <property type="entry name" value="YqgF/RNaseH-like_dom_sf"/>
</dbReference>
<dbReference type="NCBIfam" id="TIGR00250">
    <property type="entry name" value="RNAse_H_YqgF"/>
    <property type="match status" value="1"/>
</dbReference>
<dbReference type="PANTHER" id="PTHR33317">
    <property type="entry name" value="POLYNUCLEOTIDYL TRANSFERASE, RIBONUCLEASE H-LIKE SUPERFAMILY PROTEIN"/>
    <property type="match status" value="1"/>
</dbReference>
<dbReference type="PANTHER" id="PTHR33317:SF4">
    <property type="entry name" value="POLYNUCLEOTIDYL TRANSFERASE, RIBONUCLEASE H-LIKE SUPERFAMILY PROTEIN"/>
    <property type="match status" value="1"/>
</dbReference>
<dbReference type="Pfam" id="PF03652">
    <property type="entry name" value="RuvX"/>
    <property type="match status" value="1"/>
</dbReference>
<dbReference type="SMART" id="SM00732">
    <property type="entry name" value="YqgFc"/>
    <property type="match status" value="1"/>
</dbReference>
<dbReference type="SUPFAM" id="SSF53098">
    <property type="entry name" value="Ribonuclease H-like"/>
    <property type="match status" value="1"/>
</dbReference>
<accession>A8Z5W0</accession>
<reference key="1">
    <citation type="journal article" date="2007" name="Proc. Natl. Acad. Sci. U.S.A.">
        <title>Parallel genomic evolution and metabolic interdependence in an ancient symbiosis.</title>
        <authorList>
            <person name="McCutcheon J.P."/>
            <person name="Moran N.A."/>
        </authorList>
    </citation>
    <scope>NUCLEOTIDE SEQUENCE [LARGE SCALE GENOMIC DNA]</scope>
    <source>
        <strain>GWSS</strain>
    </source>
</reference>